<keyword id="KW-0961">Cell wall biogenesis/degradation</keyword>
<keyword id="KW-1015">Disulfide bond</keyword>
<keyword id="KW-0325">Glycoprotein</keyword>
<keyword id="KW-0326">Glycosidase</keyword>
<keyword id="KW-0378">Hydrolase</keyword>
<keyword id="KW-0677">Repeat</keyword>
<keyword id="KW-0964">Secreted</keyword>
<keyword id="KW-0732">Signal</keyword>
<keyword id="KW-0865">Zymogen</keyword>
<protein>
    <recommendedName>
        <fullName>Probable endopolygalacturonase AFUB_016610</fullName>
        <ecNumber>3.2.1.15</ecNumber>
    </recommendedName>
    <alternativeName>
        <fullName>Pectinase AFUB_016610</fullName>
    </alternativeName>
    <alternativeName>
        <fullName>Polygalacturonase AFUB_016610</fullName>
    </alternativeName>
</protein>
<feature type="signal peptide" evidence="2">
    <location>
        <begin position="1"/>
        <end position="19"/>
    </location>
</feature>
<feature type="propeptide" id="PRO_0000393690" evidence="2">
    <location>
        <begin position="20"/>
        <end position="35"/>
    </location>
</feature>
<feature type="chain" id="PRO_0000393691" description="Probable endopolygalacturonase AFUB_016610">
    <location>
        <begin position="36"/>
        <end position="378"/>
    </location>
</feature>
<feature type="repeat" description="PbH1 1">
    <location>
        <begin position="147"/>
        <end position="169"/>
    </location>
</feature>
<feature type="repeat" description="PbH1 2">
    <location>
        <begin position="170"/>
        <end position="200"/>
    </location>
</feature>
<feature type="repeat" description="PbH1 3">
    <location>
        <begin position="201"/>
        <end position="222"/>
    </location>
</feature>
<feature type="repeat" description="PbH1 4">
    <location>
        <begin position="252"/>
        <end position="273"/>
    </location>
</feature>
<feature type="repeat" description="PbH1 5">
    <location>
        <begin position="281"/>
        <end position="303"/>
    </location>
</feature>
<feature type="active site" description="Proton donor" evidence="3">
    <location>
        <position position="215"/>
    </location>
</feature>
<feature type="active site" evidence="3">
    <location>
        <position position="237"/>
    </location>
</feature>
<feature type="glycosylation site" description="N-linked (GlcNAc...) asparagine" evidence="2">
    <location>
        <position position="254"/>
    </location>
</feature>
<feature type="glycosylation site" description="N-linked (GlcNAc...) asparagine" evidence="2">
    <location>
        <position position="327"/>
    </location>
</feature>
<feature type="glycosylation site" description="N-linked (GlcNAc...) asparagine" evidence="2">
    <location>
        <position position="352"/>
    </location>
</feature>
<feature type="disulfide bond" evidence="1">
    <location>
        <begin position="38"/>
        <end position="56"/>
    </location>
</feature>
<feature type="disulfide bond" evidence="1">
    <location>
        <begin position="217"/>
        <end position="233"/>
    </location>
</feature>
<feature type="disulfide bond" evidence="1">
    <location>
        <begin position="345"/>
        <end position="350"/>
    </location>
</feature>
<feature type="disulfide bond" evidence="1">
    <location>
        <begin position="369"/>
        <end position="378"/>
    </location>
</feature>
<gene>
    <name type="ORF">AFUB_016610</name>
</gene>
<name>PGLR_ASPFC</name>
<reference key="1">
    <citation type="journal article" date="2008" name="PLoS Genet.">
        <title>Genomic islands in the pathogenic filamentous fungus Aspergillus fumigatus.</title>
        <authorList>
            <person name="Fedorova N.D."/>
            <person name="Khaldi N."/>
            <person name="Joardar V.S."/>
            <person name="Maiti R."/>
            <person name="Amedeo P."/>
            <person name="Anderson M.J."/>
            <person name="Crabtree J."/>
            <person name="Silva J.C."/>
            <person name="Badger J.H."/>
            <person name="Albarraq A."/>
            <person name="Angiuoli S."/>
            <person name="Bussey H."/>
            <person name="Bowyer P."/>
            <person name="Cotty P.J."/>
            <person name="Dyer P.S."/>
            <person name="Egan A."/>
            <person name="Galens K."/>
            <person name="Fraser-Liggett C.M."/>
            <person name="Haas B.J."/>
            <person name="Inman J.M."/>
            <person name="Kent R."/>
            <person name="Lemieux S."/>
            <person name="Malavazi I."/>
            <person name="Orvis J."/>
            <person name="Roemer T."/>
            <person name="Ronning C.M."/>
            <person name="Sundaram J.P."/>
            <person name="Sutton G."/>
            <person name="Turner G."/>
            <person name="Venter J.C."/>
            <person name="White O.R."/>
            <person name="Whitty B.R."/>
            <person name="Youngman P."/>
            <person name="Wolfe K.H."/>
            <person name="Goldman G.H."/>
            <person name="Wortman J.R."/>
            <person name="Jiang B."/>
            <person name="Denning D.W."/>
            <person name="Nierman W.C."/>
        </authorList>
    </citation>
    <scope>NUCLEOTIDE SEQUENCE [LARGE SCALE GENOMIC DNA]</scope>
    <source>
        <strain>CBS 144.89 / FGSC A1163 / CEA10</strain>
    </source>
</reference>
<comment type="function">
    <text evidence="1">Involved in maceration and soft-rotting of plant tissue. Hydrolyzes the 1,4-alpha glycosidic bonds of de-esterified pectate in the smooth region of the plant cell wall (By similarity).</text>
</comment>
<comment type="catalytic activity">
    <reaction>
        <text>(1,4-alpha-D-galacturonosyl)n+m + H2O = (1,4-alpha-D-galacturonosyl)n + (1,4-alpha-D-galacturonosyl)m.</text>
        <dbReference type="EC" id="3.2.1.15"/>
    </reaction>
</comment>
<comment type="subcellular location">
    <subcellularLocation>
        <location evidence="1">Secreted</location>
    </subcellularLocation>
</comment>
<comment type="similarity">
    <text evidence="4">Belongs to the glycosyl hydrolase 28 family.</text>
</comment>
<sequence>MLKLMGSLVLLASAAEVIASPAAEPVAPSTTLEKRAPCTFSGSNGAAAAMASQKACSTIVLSNVAVPAGTTLDLSDLADGTTVTFEGETTWGYQEWSGPLLKISGKNIKVKGASGATLNPDGARWWDGQGGNGGKTKPKFFAAHDLTSSSSITDLHILNTPVQAVSINGCDGLTITDITIDNSAGDTQGGHNTDAFDIGSSSNIIISGAKVYNQDDCVAVNSGTDITFTGGLCSGGHGLSIGSVGGRSDNTVENVSFTNSQVTNSDNGLRIKATKGKTGTIKGVTYSGITLSSIRKYGILIEQNYDGGDLKGDPTSGIPITDLTMQNISGKGAVASSGYNIAIVCGSGACSNWTWKSVEVTGGKTYGSCKNVPSVAQC</sequence>
<dbReference type="EC" id="3.2.1.15"/>
<dbReference type="EMBL" id="DS499594">
    <property type="protein sequence ID" value="EDP56939.1"/>
    <property type="molecule type" value="Genomic_DNA"/>
</dbReference>
<dbReference type="SMR" id="B0XPA1"/>
<dbReference type="EnsemblFungi" id="EDP56939">
    <property type="protein sequence ID" value="EDP56939"/>
    <property type="gene ID" value="AFUB_016610"/>
</dbReference>
<dbReference type="VEuPathDB" id="FungiDB:AFUB_016610"/>
<dbReference type="HOGENOM" id="CLU_040116_0_0_1"/>
<dbReference type="OrthoDB" id="109485at5052"/>
<dbReference type="PhylomeDB" id="B0XPA1"/>
<dbReference type="Proteomes" id="UP000001699">
    <property type="component" value="Unassembled WGS sequence"/>
</dbReference>
<dbReference type="GO" id="GO:0005576">
    <property type="term" value="C:extracellular region"/>
    <property type="evidence" value="ECO:0000250"/>
    <property type="project" value="UniProtKB"/>
</dbReference>
<dbReference type="GO" id="GO:0004650">
    <property type="term" value="F:polygalacturonase activity"/>
    <property type="evidence" value="ECO:0000250"/>
    <property type="project" value="UniProtKB"/>
</dbReference>
<dbReference type="GO" id="GO:0071555">
    <property type="term" value="P:cell wall organization"/>
    <property type="evidence" value="ECO:0007669"/>
    <property type="project" value="UniProtKB-KW"/>
</dbReference>
<dbReference type="GO" id="GO:0045490">
    <property type="term" value="P:pectin catabolic process"/>
    <property type="evidence" value="ECO:0000250"/>
    <property type="project" value="UniProtKB"/>
</dbReference>
<dbReference type="FunFam" id="2.160.20.10:FF:000002">
    <property type="entry name" value="Endopolygalacturonase D"/>
    <property type="match status" value="1"/>
</dbReference>
<dbReference type="Gene3D" id="2.160.20.10">
    <property type="entry name" value="Single-stranded right-handed beta-helix, Pectin lyase-like"/>
    <property type="match status" value="1"/>
</dbReference>
<dbReference type="InterPro" id="IPR000743">
    <property type="entry name" value="Glyco_hydro_28"/>
</dbReference>
<dbReference type="InterPro" id="IPR050434">
    <property type="entry name" value="Glycosyl_hydrlase_28"/>
</dbReference>
<dbReference type="InterPro" id="IPR006626">
    <property type="entry name" value="PbH1"/>
</dbReference>
<dbReference type="InterPro" id="IPR012334">
    <property type="entry name" value="Pectin_lyas_fold"/>
</dbReference>
<dbReference type="InterPro" id="IPR011050">
    <property type="entry name" value="Pectin_lyase_fold/virulence"/>
</dbReference>
<dbReference type="PANTHER" id="PTHR31884">
    <property type="entry name" value="POLYGALACTURONASE"/>
    <property type="match status" value="1"/>
</dbReference>
<dbReference type="PANTHER" id="PTHR31884:SF1">
    <property type="entry name" value="POLYGALACTURONASE"/>
    <property type="match status" value="1"/>
</dbReference>
<dbReference type="Pfam" id="PF00295">
    <property type="entry name" value="Glyco_hydro_28"/>
    <property type="match status" value="1"/>
</dbReference>
<dbReference type="SMART" id="SM00710">
    <property type="entry name" value="PbH1"/>
    <property type="match status" value="5"/>
</dbReference>
<dbReference type="SUPFAM" id="SSF51126">
    <property type="entry name" value="Pectin lyase-like"/>
    <property type="match status" value="1"/>
</dbReference>
<dbReference type="PROSITE" id="PS00502">
    <property type="entry name" value="POLYGALACTURONASE"/>
    <property type="match status" value="1"/>
</dbReference>
<proteinExistence type="inferred from homology"/>
<accession>B0XPA1</accession>
<evidence type="ECO:0000250" key="1"/>
<evidence type="ECO:0000255" key="2"/>
<evidence type="ECO:0000255" key="3">
    <source>
        <dbReference type="PROSITE-ProRule" id="PRU10052"/>
    </source>
</evidence>
<evidence type="ECO:0000305" key="4"/>
<organism>
    <name type="scientific">Aspergillus fumigatus (strain CBS 144.89 / FGSC A1163 / CEA10)</name>
    <name type="common">Neosartorya fumigata</name>
    <dbReference type="NCBI Taxonomy" id="451804"/>
    <lineage>
        <taxon>Eukaryota</taxon>
        <taxon>Fungi</taxon>
        <taxon>Dikarya</taxon>
        <taxon>Ascomycota</taxon>
        <taxon>Pezizomycotina</taxon>
        <taxon>Eurotiomycetes</taxon>
        <taxon>Eurotiomycetidae</taxon>
        <taxon>Eurotiales</taxon>
        <taxon>Aspergillaceae</taxon>
        <taxon>Aspergillus</taxon>
        <taxon>Aspergillus subgen. Fumigati</taxon>
    </lineage>
</organism>